<organism>
    <name type="scientific">Mus musculus</name>
    <name type="common">Mouse</name>
    <dbReference type="NCBI Taxonomy" id="10090"/>
    <lineage>
        <taxon>Eukaryota</taxon>
        <taxon>Metazoa</taxon>
        <taxon>Chordata</taxon>
        <taxon>Craniata</taxon>
        <taxon>Vertebrata</taxon>
        <taxon>Euteleostomi</taxon>
        <taxon>Mammalia</taxon>
        <taxon>Eutheria</taxon>
        <taxon>Euarchontoglires</taxon>
        <taxon>Glires</taxon>
        <taxon>Rodentia</taxon>
        <taxon>Myomorpha</taxon>
        <taxon>Muroidea</taxon>
        <taxon>Muridae</taxon>
        <taxon>Murinae</taxon>
        <taxon>Mus</taxon>
        <taxon>Mus</taxon>
    </lineage>
</organism>
<feature type="signal peptide" evidence="4">
    <location>
        <begin position="1"/>
        <end position="24"/>
    </location>
</feature>
<feature type="chain" id="PRO_0000018924" description="H-2 class I histocompatibility antigen, D-D alpha chain">
    <location>
        <begin position="25"/>
        <end position="365"/>
    </location>
</feature>
<feature type="topological domain" description="Extracellular" evidence="1">
    <location>
        <begin position="25"/>
        <end position="311"/>
    </location>
</feature>
<feature type="transmembrane region" description="Helical" evidence="1">
    <location>
        <begin position="312"/>
        <end position="334"/>
    </location>
</feature>
<feature type="topological domain" description="Cytoplasmic" evidence="1">
    <location>
        <begin position="335"/>
        <end position="365"/>
    </location>
</feature>
<feature type="domain" description="Ig-like C1-type">
    <location>
        <begin position="209"/>
        <end position="297"/>
    </location>
</feature>
<feature type="region of interest" description="Alpha-1">
    <location>
        <begin position="25"/>
        <end position="114"/>
    </location>
</feature>
<feature type="region of interest" description="Alpha-2">
    <location>
        <begin position="115"/>
        <end position="206"/>
    </location>
</feature>
<feature type="region of interest" description="Alpha-3">
    <location>
        <begin position="207"/>
        <end position="298"/>
    </location>
</feature>
<feature type="region of interest" description="Connecting peptide">
    <location>
        <begin position="299"/>
        <end position="311"/>
    </location>
</feature>
<feature type="region of interest" description="Disordered" evidence="3">
    <location>
        <begin position="343"/>
        <end position="365"/>
    </location>
</feature>
<feature type="modified residue" description="Phosphoserine" evidence="6">
    <location>
        <position position="356"/>
    </location>
</feature>
<feature type="modified residue" description="Phosphoserine" evidence="6">
    <location>
        <position position="359"/>
    </location>
</feature>
<feature type="glycosylation site" description="N-linked (GlcNAc...) asparagine" evidence="1">
    <location>
        <position position="110"/>
    </location>
</feature>
<feature type="glycosylation site" description="N-linked (GlcNAc...) asparagine" evidence="1">
    <location>
        <position position="200"/>
    </location>
</feature>
<feature type="disulfide bond" evidence="2">
    <location>
        <begin position="125"/>
        <end position="188"/>
    </location>
</feature>
<feature type="disulfide bond" evidence="2">
    <location>
        <begin position="227"/>
        <end position="283"/>
    </location>
</feature>
<feature type="strand" evidence="10">
    <location>
        <begin position="27"/>
        <end position="36"/>
    </location>
</feature>
<feature type="strand" evidence="10">
    <location>
        <begin position="41"/>
        <end position="43"/>
    </location>
</feature>
<feature type="strand" evidence="10">
    <location>
        <begin position="45"/>
        <end position="52"/>
    </location>
</feature>
<feature type="strand" evidence="10">
    <location>
        <begin position="55"/>
        <end position="61"/>
    </location>
</feature>
<feature type="strand" evidence="10">
    <location>
        <begin position="64"/>
        <end position="66"/>
    </location>
</feature>
<feature type="strand" evidence="11">
    <location>
        <begin position="70"/>
        <end position="73"/>
    </location>
</feature>
<feature type="helix" evidence="10">
    <location>
        <begin position="74"/>
        <end position="76"/>
    </location>
</feature>
<feature type="helix" evidence="10">
    <location>
        <begin position="81"/>
        <end position="109"/>
    </location>
</feature>
<feature type="strand" evidence="9">
    <location>
        <begin position="113"/>
        <end position="115"/>
    </location>
</feature>
<feature type="strand" evidence="10">
    <location>
        <begin position="118"/>
        <end position="127"/>
    </location>
</feature>
<feature type="strand" evidence="7">
    <location>
        <begin position="129"/>
        <end position="131"/>
    </location>
</feature>
<feature type="strand" evidence="10">
    <location>
        <begin position="133"/>
        <end position="142"/>
    </location>
</feature>
<feature type="strand" evidence="10">
    <location>
        <begin position="145"/>
        <end position="150"/>
    </location>
</feature>
<feature type="strand" evidence="10">
    <location>
        <begin position="157"/>
        <end position="159"/>
    </location>
</feature>
<feature type="helix" evidence="10">
    <location>
        <begin position="162"/>
        <end position="174"/>
    </location>
</feature>
<feature type="helix" evidence="10">
    <location>
        <begin position="176"/>
        <end position="185"/>
    </location>
</feature>
<feature type="helix" evidence="10">
    <location>
        <begin position="187"/>
        <end position="198"/>
    </location>
</feature>
<feature type="turn" evidence="10">
    <location>
        <begin position="199"/>
        <end position="204"/>
    </location>
</feature>
<feature type="strand" evidence="10">
    <location>
        <begin position="210"/>
        <end position="217"/>
    </location>
</feature>
<feature type="strand" evidence="10">
    <location>
        <begin position="221"/>
        <end position="235"/>
    </location>
</feature>
<feature type="strand" evidence="10">
    <location>
        <begin position="238"/>
        <end position="246"/>
    </location>
</feature>
<feature type="turn" evidence="8">
    <location>
        <begin position="249"/>
        <end position="251"/>
    </location>
</feature>
<feature type="strand" evidence="10">
    <location>
        <begin position="252"/>
        <end position="254"/>
    </location>
</feature>
<feature type="strand" evidence="10">
    <location>
        <begin position="261"/>
        <end position="263"/>
    </location>
</feature>
<feature type="strand" evidence="10">
    <location>
        <begin position="265"/>
        <end position="273"/>
    </location>
</feature>
<feature type="helix" evidence="10">
    <location>
        <begin position="278"/>
        <end position="280"/>
    </location>
</feature>
<feature type="strand" evidence="10">
    <location>
        <begin position="282"/>
        <end position="286"/>
    </location>
</feature>
<feature type="strand" evidence="11">
    <location>
        <begin position="290"/>
        <end position="292"/>
    </location>
</feature>
<feature type="strand" evidence="10">
    <location>
        <begin position="294"/>
        <end position="296"/>
    </location>
</feature>
<accession>P01900</accession>
<name>HA12_MOUSE</name>
<dbReference type="EMBL" id="L29190">
    <property type="protein sequence ID" value="AAA39581.1"/>
    <property type="molecule type" value="Genomic_DNA"/>
</dbReference>
<dbReference type="EMBL" id="U47326">
    <property type="protein sequence ID" value="AAB17604.1"/>
    <property type="molecule type" value="mRNA"/>
</dbReference>
<dbReference type="PDB" id="1BII">
    <property type="method" value="X-ray"/>
    <property type="resolution" value="2.40 A"/>
    <property type="chains" value="A=1-365"/>
</dbReference>
<dbReference type="PDB" id="1DDH">
    <property type="method" value="X-ray"/>
    <property type="resolution" value="3.10 A"/>
    <property type="chains" value="A=26-298"/>
</dbReference>
<dbReference type="PDB" id="1QO3">
    <property type="method" value="X-ray"/>
    <property type="resolution" value="2.30 A"/>
    <property type="chains" value="A=26-301"/>
</dbReference>
<dbReference type="PDB" id="3DMM">
    <property type="method" value="X-ray"/>
    <property type="resolution" value="2.60 A"/>
    <property type="chains" value="A=26-299"/>
</dbReference>
<dbReference type="PDB" id="3E6F">
    <property type="method" value="X-ray"/>
    <property type="resolution" value="2.41 A"/>
    <property type="chains" value="A=26-298"/>
</dbReference>
<dbReference type="PDB" id="3E6H">
    <property type="method" value="X-ray"/>
    <property type="resolution" value="2.10 A"/>
    <property type="chains" value="A=26-299"/>
</dbReference>
<dbReference type="PDB" id="3ECB">
    <property type="method" value="X-ray"/>
    <property type="resolution" value="1.70 A"/>
    <property type="chains" value="A=26-301"/>
</dbReference>
<dbReference type="PDB" id="5IVX">
    <property type="method" value="X-ray"/>
    <property type="resolution" value="2.10 A"/>
    <property type="chains" value="A=26-301"/>
</dbReference>
<dbReference type="PDB" id="5KD4">
    <property type="method" value="X-ray"/>
    <property type="resolution" value="3.05 A"/>
    <property type="chains" value="A/C=26-301"/>
</dbReference>
<dbReference type="PDB" id="5KD7">
    <property type="method" value="X-ray"/>
    <property type="resolution" value="2.35 A"/>
    <property type="chains" value="A/C/F/I=26-300"/>
</dbReference>
<dbReference type="PDB" id="5T7G">
    <property type="method" value="X-ray"/>
    <property type="resolution" value="1.96 A"/>
    <property type="chains" value="A/C=26-300"/>
</dbReference>
<dbReference type="PDB" id="5WER">
    <property type="method" value="X-ray"/>
    <property type="resolution" value="3.41 A"/>
    <property type="chains" value="A/D/G/J=26-301"/>
</dbReference>
<dbReference type="PDB" id="5WES">
    <property type="method" value="X-ray"/>
    <property type="resolution" value="2.71 A"/>
    <property type="chains" value="A=26-301"/>
</dbReference>
<dbReference type="PDB" id="5WET">
    <property type="method" value="X-ray"/>
    <property type="resolution" value="2.64 A"/>
    <property type="chains" value="A=26-301"/>
</dbReference>
<dbReference type="PDB" id="5WEU">
    <property type="method" value="X-ray"/>
    <property type="resolution" value="1.58 A"/>
    <property type="chains" value="A=26-301"/>
</dbReference>
<dbReference type="PDB" id="6NPR">
    <property type="method" value="X-ray"/>
    <property type="resolution" value="2.37 A"/>
    <property type="chains" value="A/C=26-301"/>
</dbReference>
<dbReference type="PDB" id="8D5E">
    <property type="method" value="X-ray"/>
    <property type="resolution" value="2.46 A"/>
    <property type="chains" value="A=26-299"/>
</dbReference>
<dbReference type="PDB" id="8D5F">
    <property type="method" value="X-ray"/>
    <property type="resolution" value="2.31 A"/>
    <property type="chains" value="A=26-299"/>
</dbReference>
<dbReference type="PDB" id="8FHL">
    <property type="method" value="X-ray"/>
    <property type="resolution" value="2.19 A"/>
    <property type="chains" value="A=26-301"/>
</dbReference>
<dbReference type="PDB" id="8FHU">
    <property type="method" value="X-ray"/>
    <property type="resolution" value="1.80 A"/>
    <property type="chains" value="A/D=26-301"/>
</dbReference>
<dbReference type="PDB" id="8TQ4">
    <property type="method" value="X-ray"/>
    <property type="resolution" value="3.59 A"/>
    <property type="chains" value="A/E=26-298"/>
</dbReference>
<dbReference type="PDB" id="8TQ7">
    <property type="method" value="X-ray"/>
    <property type="resolution" value="2.80 A"/>
    <property type="chains" value="A/C=26-298"/>
</dbReference>
<dbReference type="PDB" id="8TQ8">
    <property type="method" value="X-ray"/>
    <property type="resolution" value="2.69 A"/>
    <property type="chains" value="A/C=26-298"/>
</dbReference>
<dbReference type="PDB" id="8TQ9">
    <property type="method" value="X-ray"/>
    <property type="resolution" value="2.90 A"/>
    <property type="chains" value="A=26-298"/>
</dbReference>
<dbReference type="PDBsum" id="1BII"/>
<dbReference type="PDBsum" id="1DDH"/>
<dbReference type="PDBsum" id="1QO3"/>
<dbReference type="PDBsum" id="3DMM"/>
<dbReference type="PDBsum" id="3E6F"/>
<dbReference type="PDBsum" id="3E6H"/>
<dbReference type="PDBsum" id="3ECB"/>
<dbReference type="PDBsum" id="5IVX"/>
<dbReference type="PDBsum" id="5KD4"/>
<dbReference type="PDBsum" id="5KD7"/>
<dbReference type="PDBsum" id="5T7G"/>
<dbReference type="PDBsum" id="5WER"/>
<dbReference type="PDBsum" id="5WES"/>
<dbReference type="PDBsum" id="5WET"/>
<dbReference type="PDBsum" id="5WEU"/>
<dbReference type="PDBsum" id="6NPR"/>
<dbReference type="PDBsum" id="8D5E"/>
<dbReference type="PDBsum" id="8D5F"/>
<dbReference type="PDBsum" id="8FHL"/>
<dbReference type="PDBsum" id="8FHU"/>
<dbReference type="PDBsum" id="8TQ4"/>
<dbReference type="PDBsum" id="8TQ7"/>
<dbReference type="PDBsum" id="8TQ8"/>
<dbReference type="PDBsum" id="8TQ9"/>
<dbReference type="SMR" id="P01900"/>
<dbReference type="DIP" id="DIP-6110N"/>
<dbReference type="MINT" id="P01900"/>
<dbReference type="GlyCosmos" id="P01900">
    <property type="glycosylation" value="2 sites, No reported glycans"/>
</dbReference>
<dbReference type="iPTMnet" id="P01900"/>
<dbReference type="PhosphoSitePlus" id="P01900"/>
<dbReference type="SwissPalm" id="P01900"/>
<dbReference type="jPOST" id="P01900"/>
<dbReference type="PeptideAtlas" id="P01900"/>
<dbReference type="ProteomicsDB" id="269797"/>
<dbReference type="Pumba" id="P01900"/>
<dbReference type="AGR" id="MGI:95896"/>
<dbReference type="MGI" id="MGI:95896">
    <property type="gene designation" value="H2-D1"/>
</dbReference>
<dbReference type="ChiTaRS" id="H2-D1">
    <property type="organism name" value="mouse"/>
</dbReference>
<dbReference type="EvolutionaryTrace" id="P01900"/>
<dbReference type="Proteomes" id="UP000000589">
    <property type="component" value="Unplaced"/>
</dbReference>
<dbReference type="GO" id="GO:0009897">
    <property type="term" value="C:external side of plasma membrane"/>
    <property type="evidence" value="ECO:0000314"/>
    <property type="project" value="MGI"/>
</dbReference>
<dbReference type="GO" id="GO:0098553">
    <property type="term" value="C:lumenal side of endoplasmic reticulum membrane"/>
    <property type="evidence" value="ECO:0000304"/>
    <property type="project" value="Reactome"/>
</dbReference>
<dbReference type="GO" id="GO:0042612">
    <property type="term" value="C:MHC class I protein complex"/>
    <property type="evidence" value="ECO:0007669"/>
    <property type="project" value="UniProtKB-KW"/>
</dbReference>
<dbReference type="GO" id="GO:0030670">
    <property type="term" value="C:phagocytic vesicle membrane"/>
    <property type="evidence" value="ECO:0000304"/>
    <property type="project" value="Reactome"/>
</dbReference>
<dbReference type="GO" id="GO:0005886">
    <property type="term" value="C:plasma membrane"/>
    <property type="evidence" value="ECO:0000314"/>
    <property type="project" value="MGI"/>
</dbReference>
<dbReference type="GO" id="GO:0002485">
    <property type="term" value="P:antigen processing and presentation of endogenous peptide antigen via MHC class I via ER pathway, TAP-dependent"/>
    <property type="evidence" value="ECO:0000314"/>
    <property type="project" value="MGI"/>
</dbReference>
<dbReference type="GO" id="GO:0010977">
    <property type="term" value="P:negative regulation of neuron projection development"/>
    <property type="evidence" value="ECO:0000314"/>
    <property type="project" value="MGI"/>
</dbReference>
<dbReference type="GO" id="GO:0001916">
    <property type="term" value="P:positive regulation of T cell mediated cytotoxicity"/>
    <property type="evidence" value="ECO:0000314"/>
    <property type="project" value="MGI"/>
</dbReference>
<dbReference type="GO" id="GO:0001913">
    <property type="term" value="P:T cell mediated cytotoxicity"/>
    <property type="evidence" value="ECO:0000314"/>
    <property type="project" value="MGI"/>
</dbReference>
<dbReference type="CDD" id="cd21020">
    <property type="entry name" value="IgC1_MHC_Ia_H-2Dd"/>
    <property type="match status" value="1"/>
</dbReference>
<dbReference type="FunFam" id="2.60.40.10:FF:000014">
    <property type="entry name" value="H-2 class I histocompatibility antigen, alpha chain"/>
    <property type="match status" value="1"/>
</dbReference>
<dbReference type="FunFam" id="3.30.500.10:FF:000001">
    <property type="entry name" value="H-2 class I histocompatibility antigen, alpha chain"/>
    <property type="match status" value="1"/>
</dbReference>
<dbReference type="Gene3D" id="2.60.40.10">
    <property type="entry name" value="Immunoglobulins"/>
    <property type="match status" value="1"/>
</dbReference>
<dbReference type="Gene3D" id="3.30.500.10">
    <property type="entry name" value="MHC class I-like antigen recognition-like"/>
    <property type="match status" value="1"/>
</dbReference>
<dbReference type="InterPro" id="IPR007110">
    <property type="entry name" value="Ig-like_dom"/>
</dbReference>
<dbReference type="InterPro" id="IPR036179">
    <property type="entry name" value="Ig-like_dom_sf"/>
</dbReference>
<dbReference type="InterPro" id="IPR013783">
    <property type="entry name" value="Ig-like_fold"/>
</dbReference>
<dbReference type="InterPro" id="IPR003006">
    <property type="entry name" value="Ig/MHC_CS"/>
</dbReference>
<dbReference type="InterPro" id="IPR003597">
    <property type="entry name" value="Ig_C1-set"/>
</dbReference>
<dbReference type="InterPro" id="IPR050208">
    <property type="entry name" value="MHC_class-I_related"/>
</dbReference>
<dbReference type="InterPro" id="IPR011161">
    <property type="entry name" value="MHC_I-like_Ag-recog"/>
</dbReference>
<dbReference type="InterPro" id="IPR037055">
    <property type="entry name" value="MHC_I-like_Ag-recog_sf"/>
</dbReference>
<dbReference type="InterPro" id="IPR011162">
    <property type="entry name" value="MHC_I/II-like_Ag-recog"/>
</dbReference>
<dbReference type="InterPro" id="IPR001039">
    <property type="entry name" value="MHC_I_a_a1/a2"/>
</dbReference>
<dbReference type="InterPro" id="IPR010579">
    <property type="entry name" value="MHC_I_a_C"/>
</dbReference>
<dbReference type="PANTHER" id="PTHR16675:SF251">
    <property type="entry name" value="HLA CLASS I HISTOCOMPATIBILITY ANTIGEN, C ALPHA CHAIN"/>
    <property type="match status" value="1"/>
</dbReference>
<dbReference type="PANTHER" id="PTHR16675">
    <property type="entry name" value="MHC CLASS I-RELATED"/>
    <property type="match status" value="1"/>
</dbReference>
<dbReference type="Pfam" id="PF07654">
    <property type="entry name" value="C1-set"/>
    <property type="match status" value="1"/>
</dbReference>
<dbReference type="Pfam" id="PF00129">
    <property type="entry name" value="MHC_I"/>
    <property type="match status" value="1"/>
</dbReference>
<dbReference type="Pfam" id="PF06623">
    <property type="entry name" value="MHC_I_C"/>
    <property type="match status" value="1"/>
</dbReference>
<dbReference type="PRINTS" id="PR01638">
    <property type="entry name" value="MHCCLASSI"/>
</dbReference>
<dbReference type="SMART" id="SM00407">
    <property type="entry name" value="IGc1"/>
    <property type="match status" value="1"/>
</dbReference>
<dbReference type="SUPFAM" id="SSF48726">
    <property type="entry name" value="Immunoglobulin"/>
    <property type="match status" value="1"/>
</dbReference>
<dbReference type="SUPFAM" id="SSF54452">
    <property type="entry name" value="MHC antigen-recognition domain"/>
    <property type="match status" value="1"/>
</dbReference>
<dbReference type="PROSITE" id="PS50835">
    <property type="entry name" value="IG_LIKE"/>
    <property type="match status" value="1"/>
</dbReference>
<dbReference type="PROSITE" id="PS00290">
    <property type="entry name" value="IG_MHC"/>
    <property type="match status" value="1"/>
</dbReference>
<gene>
    <name type="primary">H2-D1</name>
</gene>
<keyword id="KW-0002">3D-structure</keyword>
<keyword id="KW-0903">Direct protein sequencing</keyword>
<keyword id="KW-1015">Disulfide bond</keyword>
<keyword id="KW-0325">Glycoprotein</keyword>
<keyword id="KW-0391">Immunity</keyword>
<keyword id="KW-0472">Membrane</keyword>
<keyword id="KW-0490">MHC I</keyword>
<keyword id="KW-0597">Phosphoprotein</keyword>
<keyword id="KW-1185">Reference proteome</keyword>
<keyword id="KW-0732">Signal</keyword>
<keyword id="KW-0812">Transmembrane</keyword>
<keyword id="KW-1133">Transmembrane helix</keyword>
<comment type="function">
    <text>Involved in the presentation of foreign antigens to the immune system.</text>
</comment>
<comment type="subunit">
    <text>Heterodimer of an alpha chain and a beta chain (beta-2-microglobulin).</text>
</comment>
<comment type="subcellular location">
    <subcellularLocation>
        <location>Membrane</location>
        <topology>Single-pass type I membrane protein</topology>
    </subcellularLocation>
</comment>
<comment type="similarity">
    <text evidence="5">Belongs to the MHC class I family.</text>
</comment>
<reference key="1">
    <citation type="journal article" date="1983" name="J. Immunol.">
        <title>Expression of H-2Dd and H-2Ld mouse major histocompatibility antigen genes in L cells after DNA-mediated gene transfer.</title>
        <authorList>
            <person name="Margulies D.H."/>
            <person name="Evans G.A."/>
            <person name="Ozato K."/>
            <person name="Camerini-Otero R.D."/>
            <person name="Tanaka K."/>
            <person name="Appella E."/>
            <person name="Seidman J.G."/>
        </authorList>
    </citation>
    <scope>NUCLEOTIDE SEQUENCE [GENOMIC DNA]</scope>
</reference>
<reference key="2">
    <citation type="journal article" date="1985" name="J. Immunol.">
        <title>Partial nucleotide sequence of H-2Dd major histocompatibility antigen gene.</title>
        <authorList>
            <person name="Margulies D.H."/>
            <person name="Evans G.A."/>
            <person name="Ozato K."/>
            <person name="Camerini-Otero R.D."/>
            <person name="Tanaka K."/>
            <person name="Appella E."/>
            <person name="Seidman J.G."/>
        </authorList>
    </citation>
    <scope>SEQUENCE REVISION</scope>
</reference>
<reference key="3">
    <citation type="journal article" date="1985" name="Proc. Natl. Acad. Sci. U.S.A.">
        <title>DNA sequence of the mouse H-2Dd transplantation antigen gene.</title>
        <authorList>
            <person name="Sher B.T."/>
            <person name="Nairn R."/>
            <person name="Coligan J.E."/>
            <person name="Hood L.E."/>
        </authorList>
    </citation>
    <scope>NUCLEOTIDE SEQUENCE</scope>
</reference>
<reference key="4">
    <citation type="journal article" date="1996" name="Ann. Transplant.">
        <title>Nucleotide sequences of three H-2K and three H-2D complementary DNA clones coding mouse class I MHC heavy chain proteins.</title>
        <authorList>
            <person name="Wang M."/>
            <person name="Stepkowski S.M."/>
            <person name="Hebert J.S."/>
            <person name="Tian L."/>
            <person name="Yu J."/>
            <person name="Kahan B.D."/>
        </authorList>
    </citation>
    <scope>NUCLEOTIDE SEQUENCE [MRNA]</scope>
    <source>
        <strain>BALB/cJ</strain>
    </source>
</reference>
<reference key="5">
    <citation type="journal article" date="1981" name="Biochemistry">
        <title>Amino acid sequence of cyanogen bromide fragment CN-C (residues 24-98) of the mouse histocompatibility antigen H-2Dd. A comparison of the amino-terminal 100 residues of H-2Dd, Dd, Kd, and Kb reveals discrete areas of diversity.</title>
        <authorList>
            <person name="Nairn R."/>
            <person name="Nathenson S.G."/>
            <person name="Coligan J.E."/>
        </authorList>
    </citation>
    <scope>PROTEIN SEQUENCE OF 25-125</scope>
</reference>
<reference key="6">
    <citation type="journal article" date="2009" name="Immunity">
        <title>The phagosomal proteome in interferon-gamma-activated macrophages.</title>
        <authorList>
            <person name="Trost M."/>
            <person name="English L."/>
            <person name="Lemieux S."/>
            <person name="Courcelles M."/>
            <person name="Desjardins M."/>
            <person name="Thibault P."/>
        </authorList>
    </citation>
    <scope>PHOSPHORYLATION [LARGE SCALE ANALYSIS] AT SER-356 AND SER-359</scope>
    <scope>IDENTIFICATION BY MASS SPECTROMETRY [LARGE SCALE ANALYSIS]</scope>
</reference>
<reference key="7">
    <citation type="journal article" date="2010" name="Cell">
        <title>A tissue-specific atlas of mouse protein phosphorylation and expression.</title>
        <authorList>
            <person name="Huttlin E.L."/>
            <person name="Jedrychowski M.P."/>
            <person name="Elias J.E."/>
            <person name="Goswami T."/>
            <person name="Rad R."/>
            <person name="Beausoleil S.A."/>
            <person name="Villen J."/>
            <person name="Haas W."/>
            <person name="Sowa M.E."/>
            <person name="Gygi S.P."/>
        </authorList>
    </citation>
    <scope>IDENTIFICATION BY MASS SPECTROMETRY [LARGE SCALE ANALYSIS]</scope>
    <source>
        <tissue>Brown adipose tissue</tissue>
        <tissue>Kidney</tissue>
        <tissue>Liver</tissue>
        <tissue>Lung</tissue>
        <tissue>Spleen</tissue>
    </source>
</reference>
<reference key="8">
    <citation type="journal article" date="1998" name="Immunity">
        <title>The crystal structure of H-2Dd MHC class I complexed with the HIV-1-derived peptide P18-I10 at 2.4-A resolution: implications for T cell and NK cell recognition.</title>
        <authorList>
            <person name="Achour A."/>
            <person name="Persson K."/>
            <person name="Harris R.A."/>
            <person name="Sundbaeck J."/>
            <person name="Sentman C.L."/>
            <person name="Lindqvist Y."/>
            <person name="Schneider G."/>
            <person name="Kaerre K."/>
        </authorList>
    </citation>
    <scope>X-RAY CRYSTALLOGRAPHY (2.4 ANGSTROMS)</scope>
</reference>
<evidence type="ECO:0000255" key="1"/>
<evidence type="ECO:0000255" key="2">
    <source>
        <dbReference type="PROSITE-ProRule" id="PRU00114"/>
    </source>
</evidence>
<evidence type="ECO:0000256" key="3">
    <source>
        <dbReference type="SAM" id="MobiDB-lite"/>
    </source>
</evidence>
<evidence type="ECO:0000269" key="4">
    <source>
    </source>
</evidence>
<evidence type="ECO:0000305" key="5"/>
<evidence type="ECO:0007744" key="6">
    <source>
    </source>
</evidence>
<evidence type="ECO:0007829" key="7">
    <source>
        <dbReference type="PDB" id="3E6H"/>
    </source>
</evidence>
<evidence type="ECO:0007829" key="8">
    <source>
        <dbReference type="PDB" id="3ECB"/>
    </source>
</evidence>
<evidence type="ECO:0007829" key="9">
    <source>
        <dbReference type="PDB" id="5IVX"/>
    </source>
</evidence>
<evidence type="ECO:0007829" key="10">
    <source>
        <dbReference type="PDB" id="5WEU"/>
    </source>
</evidence>
<evidence type="ECO:0007829" key="11">
    <source>
        <dbReference type="PDB" id="8FHU"/>
    </source>
</evidence>
<proteinExistence type="evidence at protein level"/>
<protein>
    <recommendedName>
        <fullName>H-2 class I histocompatibility antigen, D-D alpha chain</fullName>
        <shortName>H-2D(D)</shortName>
    </recommendedName>
</protein>
<sequence>MGAMAPRTLLLLLAAALGPTQTRAGSHSLRYFVTAVSRPGFGEPRYMEVGYVDNTEFVRFDSDAENPRYEPRARWIEQEGPEYWERETRRAKGNEQSFRVDLRTALRYYNQSAGGSHTLQWMAGCDVESDGRLLRGYWQFAYDGCDYIALNEDLKTWTAADMAAQITRRKWEQAGAAERDRAYLEGECVEWLRRYLKNGNATLLRTDPPKAHVTHHRRPEGDVTLRCWALGFYPADITLTWQLNGEELTQEMELVETRPAGDGTFQKWASVVVPLGKEQKYTCHVEHEGLPEPLTLRWGKEEPPSSTKTNTVIIAVPVVLGAVVILGAVMAFVMKRRRNTGGKGGDYALAPGSQSSDMSLPDCKV</sequence>